<gene>
    <name evidence="1" type="primary">E7</name>
</gene>
<name>VE7_MMPV1</name>
<keyword id="KW-0010">Activator</keyword>
<keyword id="KW-0238">DNA-binding</keyword>
<keyword id="KW-0244">Early protein</keyword>
<keyword id="KW-1078">G1/S host cell cycle checkpoint dysregulation by virus</keyword>
<keyword id="KW-1035">Host cytoplasm</keyword>
<keyword id="KW-1048">Host nucleus</keyword>
<keyword id="KW-0945">Host-virus interaction</keyword>
<keyword id="KW-1090">Inhibition of host innate immune response by virus</keyword>
<keyword id="KW-1114">Inhibition of host interferon signaling pathway by virus</keyword>
<keyword id="KW-0922">Interferon antiviral system evasion</keyword>
<keyword id="KW-0479">Metal-binding</keyword>
<keyword id="KW-1121">Modulation of host cell cycle by virus</keyword>
<keyword id="KW-0553">Oncogene</keyword>
<keyword id="KW-1185">Reference proteome</keyword>
<keyword id="KW-0804">Transcription</keyword>
<keyword id="KW-0805">Transcription regulation</keyword>
<keyword id="KW-0899">Viral immunoevasion</keyword>
<keyword id="KW-0862">Zinc</keyword>
<keyword id="KW-0863">Zinc-finger</keyword>
<comment type="function">
    <text evidence="1">Plays a role in viral genome replication by driving entry of quiescent cells into the cell cycle. Stimulation of progression from G1 to S phase allows the virus to efficiently use the cellular DNA replicating machinery to achieve viral genome replication. E7 protein has both transforming and trans-activating activities. Induces the disassembly of the E2F1 transcription factor from RB1, with subsequent transcriptional activation of E2F1-regulated S-phase genes. Interferes with host histone deacetylation mediated by HDAC1 and HDAC2, leading to transcription activation. Also plays a role in the inhibition of both antiviral and antiproliferative functions of host interferon alpha. Interaction with host TMEM173/STING impairs the ability of TMEM173/STING to sense cytosolic DNA and promote the production of type I interferon (IFN-alpha and IFN-beta).</text>
</comment>
<comment type="subunit">
    <text evidence="1">Homodimer. Homooligomer. Interacts with host RB1; this interaction induces dissociation of RB1-E2F1 complex thereby disrupting RB1 activity. Interacts with host EP300; this interaction represses EP300 transcriptional activity. Interacts with protein E2; this interaction inhibits E7 oncogenic activity. Interacts with host TMEM173/STING; this interaction impairs the ability of TMEM173/STING to sense cytosolic DNA and promote the production of type I interferon (IFN-alpha and IFN-beta).</text>
</comment>
<comment type="subcellular location">
    <subcellularLocation>
        <location evidence="1">Host cytoplasm</location>
    </subcellularLocation>
    <subcellularLocation>
        <location evidence="1">Host nucleus</location>
    </subcellularLocation>
    <text evidence="1">Predominantly found in the host nucleus.</text>
</comment>
<comment type="domain">
    <text evidence="1">The E7 terminal domain is an intrinsically disordered domain, whose flexibility and conformational transitions confer target adaptability to the oncoprotein. It allows adaptation to a variety of protein targets and exposes the PEST degradation sequence that regulates its turnover in the cell.</text>
</comment>
<comment type="PTM">
    <text evidence="1">Highly phosphorylated.</text>
</comment>
<comment type="similarity">
    <text evidence="1">Belongs to the papillomaviridae E7 protein family.</text>
</comment>
<reference key="1">
    <citation type="journal article" date="1991" name="Virology">
        <title>Characterization of the complete RhPV 1 genomic sequence and an integration locus from a metastatic tumor.</title>
        <authorList>
            <person name="Ostrow R.S."/>
            <person name="Labresh K.V."/>
            <person name="Faras A.J."/>
        </authorList>
    </citation>
    <scope>NUCLEOTIDE SEQUENCE [GENOMIC DNA]</scope>
</reference>
<evidence type="ECO:0000255" key="1">
    <source>
        <dbReference type="HAMAP-Rule" id="MF_04004"/>
    </source>
</evidence>
<evidence type="ECO:0000256" key="2">
    <source>
        <dbReference type="SAM" id="MobiDB-lite"/>
    </source>
</evidence>
<protein>
    <recommendedName>
        <fullName evidence="1">Protein E7</fullName>
    </recommendedName>
</protein>
<organismHost>
    <name type="scientific">Macaca mulatta</name>
    <name type="common">Rhesus macaque</name>
    <dbReference type="NCBI Taxonomy" id="9544"/>
</organismHost>
<feature type="chain" id="PRO_0000133470" description="Protein E7">
    <location>
        <begin position="1"/>
        <end position="113"/>
    </location>
</feature>
<feature type="zinc finger region" evidence="1">
    <location>
        <begin position="73"/>
        <end position="109"/>
    </location>
</feature>
<feature type="region of interest" description="E7 terminal domain" evidence="1">
    <location>
        <begin position="1"/>
        <end position="47"/>
    </location>
</feature>
<feature type="region of interest" description="Disordered" evidence="2">
    <location>
        <begin position="30"/>
        <end position="62"/>
    </location>
</feature>
<feature type="short sequence motif" description="LXCXE motif; interaction with host RB1 and TMEM173/STING" evidence="1">
    <location>
        <begin position="26"/>
        <end position="30"/>
    </location>
</feature>
<feature type="short sequence motif" description="Nuclear export signal" evidence="1">
    <location>
        <begin position="91"/>
        <end position="99"/>
    </location>
</feature>
<organism>
    <name type="scientific">Macaca mulata papillomavirus 1</name>
    <name type="common">Rhpv 1</name>
    <name type="synonym">Rhesus papillomavirus type 1</name>
    <dbReference type="NCBI Taxonomy" id="2779844"/>
    <lineage>
        <taxon>Viruses</taxon>
        <taxon>Monodnaviria</taxon>
        <taxon>Shotokuvirae</taxon>
        <taxon>Cossaviricota</taxon>
        <taxon>Papovaviricetes</taxon>
        <taxon>Zurhausenvirales</taxon>
        <taxon>Papillomaviridae</taxon>
        <taxon>Firstpapillomavirinae</taxon>
        <taxon>Alphapapillomavirus</taxon>
        <taxon>Rhesus papillomavirus type 1</taxon>
    </lineage>
</organism>
<accession>P22161</accession>
<proteinExistence type="inferred from homology"/>
<sequence length="113" mass="12818">MIGPKPTLEDIVLDLQPFPQPQPVDLMCYEQLSDSSEDEDEVDHHHNNQQQHHQHARPEVPEDGDCYRIVSDCYSCGKPLRLVVVSSHEELRVLEDLLMGTLDIVCPSCASRV</sequence>
<dbReference type="EMBL" id="M60184">
    <property type="protein sequence ID" value="AAA79312.1"/>
    <property type="molecule type" value="Genomic_DNA"/>
</dbReference>
<dbReference type="PIR" id="B38503">
    <property type="entry name" value="W7WLR1"/>
</dbReference>
<dbReference type="RefSeq" id="NP_043332.1">
    <property type="nucleotide sequence ID" value="NC_001678.1"/>
</dbReference>
<dbReference type="SMR" id="P22161"/>
<dbReference type="GeneID" id="1489007"/>
<dbReference type="KEGG" id="vg:1489007"/>
<dbReference type="Proteomes" id="UP000008169">
    <property type="component" value="Genome"/>
</dbReference>
<dbReference type="GO" id="GO:0030430">
    <property type="term" value="C:host cell cytoplasm"/>
    <property type="evidence" value="ECO:0007669"/>
    <property type="project" value="UniProtKB-SubCell"/>
</dbReference>
<dbReference type="GO" id="GO:0042025">
    <property type="term" value="C:host cell nucleus"/>
    <property type="evidence" value="ECO:0007669"/>
    <property type="project" value="UniProtKB-SubCell"/>
</dbReference>
<dbReference type="GO" id="GO:0003677">
    <property type="term" value="F:DNA binding"/>
    <property type="evidence" value="ECO:0007669"/>
    <property type="project" value="UniProtKB-UniRule"/>
</dbReference>
<dbReference type="GO" id="GO:0003700">
    <property type="term" value="F:DNA-binding transcription factor activity"/>
    <property type="evidence" value="ECO:0007669"/>
    <property type="project" value="UniProtKB-UniRule"/>
</dbReference>
<dbReference type="GO" id="GO:0019904">
    <property type="term" value="F:protein domain specific binding"/>
    <property type="evidence" value="ECO:0007669"/>
    <property type="project" value="UniProtKB-UniRule"/>
</dbReference>
<dbReference type="GO" id="GO:0008270">
    <property type="term" value="F:zinc ion binding"/>
    <property type="evidence" value="ECO:0007669"/>
    <property type="project" value="UniProtKB-KW"/>
</dbReference>
<dbReference type="GO" id="GO:0006351">
    <property type="term" value="P:DNA-templated transcription"/>
    <property type="evidence" value="ECO:0007669"/>
    <property type="project" value="UniProtKB-UniRule"/>
</dbReference>
<dbReference type="GO" id="GO:0039645">
    <property type="term" value="P:symbiont-mediated perturbation of host cell cycle G1/S transition checkpoint"/>
    <property type="evidence" value="ECO:0007669"/>
    <property type="project" value="UniProtKB-UniRule"/>
</dbReference>
<dbReference type="GO" id="GO:0052170">
    <property type="term" value="P:symbiont-mediated suppression of host innate immune response"/>
    <property type="evidence" value="ECO:0007669"/>
    <property type="project" value="UniProtKB-KW"/>
</dbReference>
<dbReference type="GO" id="GO:0039502">
    <property type="term" value="P:symbiont-mediated suppression of host type I interferon-mediated signaling pathway"/>
    <property type="evidence" value="ECO:0007669"/>
    <property type="project" value="UniProtKB-UniRule"/>
</dbReference>
<dbReference type="Gene3D" id="3.30.160.330">
    <property type="match status" value="1"/>
</dbReference>
<dbReference type="HAMAP" id="MF_04004">
    <property type="entry name" value="PPV_E7"/>
    <property type="match status" value="1"/>
</dbReference>
<dbReference type="InterPro" id="IPR000148">
    <property type="entry name" value="Papilloma_E7"/>
</dbReference>
<dbReference type="Pfam" id="PF00527">
    <property type="entry name" value="E7"/>
    <property type="match status" value="1"/>
</dbReference>
<dbReference type="PIRSF" id="PIRSF003407">
    <property type="entry name" value="Papvi_E7"/>
    <property type="match status" value="1"/>
</dbReference>
<dbReference type="SUPFAM" id="SSF161234">
    <property type="entry name" value="E7 C-terminal domain-like"/>
    <property type="match status" value="1"/>
</dbReference>